<evidence type="ECO:0000255" key="1">
    <source>
        <dbReference type="HAMAP-Rule" id="MF_01346"/>
    </source>
</evidence>
<name>ATPA_CLAM3</name>
<organism>
    <name type="scientific">Clavibacter michiganensis subsp. michiganensis (strain NCPPB 382)</name>
    <dbReference type="NCBI Taxonomy" id="443906"/>
    <lineage>
        <taxon>Bacteria</taxon>
        <taxon>Bacillati</taxon>
        <taxon>Actinomycetota</taxon>
        <taxon>Actinomycetes</taxon>
        <taxon>Micrococcales</taxon>
        <taxon>Microbacteriaceae</taxon>
        <taxon>Clavibacter</taxon>
    </lineage>
</organism>
<feature type="chain" id="PRO_1000055061" description="ATP synthase subunit alpha">
    <location>
        <begin position="1"/>
        <end position="545"/>
    </location>
</feature>
<feature type="binding site" evidence="1">
    <location>
        <begin position="173"/>
        <end position="180"/>
    </location>
    <ligand>
        <name>ATP</name>
        <dbReference type="ChEBI" id="CHEBI:30616"/>
    </ligand>
</feature>
<feature type="site" description="Required for activity" evidence="1">
    <location>
        <position position="374"/>
    </location>
</feature>
<accession>A5CQ58</accession>
<gene>
    <name evidence="1" type="primary">atpA</name>
    <name type="ordered locus">CMM_1167</name>
</gene>
<protein>
    <recommendedName>
        <fullName evidence="1">ATP synthase subunit alpha</fullName>
        <ecNumber evidence="1">7.1.2.2</ecNumber>
    </recommendedName>
    <alternativeName>
        <fullName evidence="1">ATP synthase F1 sector subunit alpha</fullName>
    </alternativeName>
    <alternativeName>
        <fullName evidence="1">F-ATPase subunit alpha</fullName>
    </alternativeName>
</protein>
<comment type="function">
    <text evidence="1">Produces ATP from ADP in the presence of a proton gradient across the membrane. The alpha chain is a regulatory subunit.</text>
</comment>
<comment type="catalytic activity">
    <reaction evidence="1">
        <text>ATP + H2O + 4 H(+)(in) = ADP + phosphate + 5 H(+)(out)</text>
        <dbReference type="Rhea" id="RHEA:57720"/>
        <dbReference type="ChEBI" id="CHEBI:15377"/>
        <dbReference type="ChEBI" id="CHEBI:15378"/>
        <dbReference type="ChEBI" id="CHEBI:30616"/>
        <dbReference type="ChEBI" id="CHEBI:43474"/>
        <dbReference type="ChEBI" id="CHEBI:456216"/>
        <dbReference type="EC" id="7.1.2.2"/>
    </reaction>
</comment>
<comment type="subunit">
    <text evidence="1">F-type ATPases have 2 components, CF(1) - the catalytic core - and CF(0) - the membrane proton channel. CF(1) has five subunits: alpha(3), beta(3), gamma(1), delta(1), epsilon(1). CF(0) has three main subunits: a(1), b(2) and c(9-12). The alpha and beta chains form an alternating ring which encloses part of the gamma chain. CF(1) is attached to CF(0) by a central stalk formed by the gamma and epsilon chains, while a peripheral stalk is formed by the delta and b chains.</text>
</comment>
<comment type="subcellular location">
    <subcellularLocation>
        <location evidence="1">Cell membrane</location>
        <topology evidence="1">Peripheral membrane protein</topology>
    </subcellularLocation>
</comment>
<comment type="similarity">
    <text evidence="1">Belongs to the ATPase alpha/beta chains family.</text>
</comment>
<reference key="1">
    <citation type="journal article" date="2008" name="J. Bacteriol.">
        <title>The genome sequence of the tomato-pathogenic actinomycete Clavibacter michiganensis subsp. michiganensis NCPPB382 reveals a large island involved in pathogenicity.</title>
        <authorList>
            <person name="Gartemann K.-H."/>
            <person name="Abt B."/>
            <person name="Bekel T."/>
            <person name="Burger A."/>
            <person name="Engemann J."/>
            <person name="Fluegel M."/>
            <person name="Gaigalat L."/>
            <person name="Goesmann A."/>
            <person name="Graefen I."/>
            <person name="Kalinowski J."/>
            <person name="Kaup O."/>
            <person name="Kirchner O."/>
            <person name="Krause L."/>
            <person name="Linke B."/>
            <person name="McHardy A."/>
            <person name="Meyer F."/>
            <person name="Pohle S."/>
            <person name="Rueckert C."/>
            <person name="Schneiker S."/>
            <person name="Zellermann E.-M."/>
            <person name="Puehler A."/>
            <person name="Eichenlaub R."/>
            <person name="Kaiser O."/>
            <person name="Bartels D."/>
        </authorList>
    </citation>
    <scope>NUCLEOTIDE SEQUENCE [LARGE SCALE GENOMIC DNA]</scope>
    <source>
        <strain>NCPPB 382</strain>
    </source>
</reference>
<proteinExistence type="inferred from homology"/>
<sequence length="545" mass="59017">MAELSISPDEIRDALKDFVQSYEPGKASTTEVGYVLDAGDGIAHVQGLPGVMANELITFADGTLGLAQNLEESEIGVIVLGEFAGIEEGMEVRRTGEVLSVPVGDGYLGRVVDPLGNPIDGQGEIATEGRRALELQAPGVMQRKSVHEPMQTGIKAIDAMIPIGRGQRQLIIGDRQTGKTAIAIDTIINQKANWESGDTNKQVRCIYVAIGQKGSTIASVKGALEEAGAMEYTTIVASPASDPAGFKYLAPYTGSAIGQHWMYGGKHVLIIFDDLSKQAEAYRAVSLLLRRPPGREAYPGDVFYLHSRLLERCAKLSDELGAGSMTGLPIIETKANDVSAYIPTNVISITDGQIFLQSDLFNANQRPAVDVGISVSRVGGDAQVKSIKKVSGTLKLELAQYRSLEAFAIFASDLDAASRRQLARGARLTELLKQPQYSPFPIEEQVVSIWAGTKGKLDEVPVEDILRFERELLDHLHRNTEVLSQLKEKNVLTDDIVDAMDKAVDQFKLEFQTGEGKPLASVGSEKFEPAKAEDVNQEQIVKGKR</sequence>
<keyword id="KW-0066">ATP synthesis</keyword>
<keyword id="KW-0067">ATP-binding</keyword>
<keyword id="KW-1003">Cell membrane</keyword>
<keyword id="KW-0139">CF(1)</keyword>
<keyword id="KW-0375">Hydrogen ion transport</keyword>
<keyword id="KW-0406">Ion transport</keyword>
<keyword id="KW-0472">Membrane</keyword>
<keyword id="KW-0547">Nucleotide-binding</keyword>
<keyword id="KW-1278">Translocase</keyword>
<keyword id="KW-0813">Transport</keyword>
<dbReference type="EC" id="7.1.2.2" evidence="1"/>
<dbReference type="EMBL" id="AM711867">
    <property type="protein sequence ID" value="CAN01211.1"/>
    <property type="molecule type" value="Genomic_DNA"/>
</dbReference>
<dbReference type="RefSeq" id="WP_012037853.1">
    <property type="nucleotide sequence ID" value="NC_009480.1"/>
</dbReference>
<dbReference type="SMR" id="A5CQ58"/>
<dbReference type="KEGG" id="cmi:CMM_1167"/>
<dbReference type="eggNOG" id="COG0056">
    <property type="taxonomic scope" value="Bacteria"/>
</dbReference>
<dbReference type="HOGENOM" id="CLU_010091_2_1_11"/>
<dbReference type="OrthoDB" id="9803053at2"/>
<dbReference type="Proteomes" id="UP000001564">
    <property type="component" value="Chromosome"/>
</dbReference>
<dbReference type="GO" id="GO:0005886">
    <property type="term" value="C:plasma membrane"/>
    <property type="evidence" value="ECO:0007669"/>
    <property type="project" value="UniProtKB-SubCell"/>
</dbReference>
<dbReference type="GO" id="GO:0045259">
    <property type="term" value="C:proton-transporting ATP synthase complex"/>
    <property type="evidence" value="ECO:0007669"/>
    <property type="project" value="UniProtKB-KW"/>
</dbReference>
<dbReference type="GO" id="GO:0043531">
    <property type="term" value="F:ADP binding"/>
    <property type="evidence" value="ECO:0007669"/>
    <property type="project" value="TreeGrafter"/>
</dbReference>
<dbReference type="GO" id="GO:0005524">
    <property type="term" value="F:ATP binding"/>
    <property type="evidence" value="ECO:0007669"/>
    <property type="project" value="UniProtKB-UniRule"/>
</dbReference>
<dbReference type="GO" id="GO:0046933">
    <property type="term" value="F:proton-transporting ATP synthase activity, rotational mechanism"/>
    <property type="evidence" value="ECO:0007669"/>
    <property type="project" value="UniProtKB-UniRule"/>
</dbReference>
<dbReference type="CDD" id="cd18113">
    <property type="entry name" value="ATP-synt_F1_alpha_C"/>
    <property type="match status" value="1"/>
</dbReference>
<dbReference type="CDD" id="cd18116">
    <property type="entry name" value="ATP-synt_F1_alpha_N"/>
    <property type="match status" value="1"/>
</dbReference>
<dbReference type="CDD" id="cd01132">
    <property type="entry name" value="F1-ATPase_alpha_CD"/>
    <property type="match status" value="1"/>
</dbReference>
<dbReference type="FunFam" id="1.20.150.20:FF:000001">
    <property type="entry name" value="ATP synthase subunit alpha"/>
    <property type="match status" value="1"/>
</dbReference>
<dbReference type="FunFam" id="3.40.50.300:FF:000002">
    <property type="entry name" value="ATP synthase subunit alpha"/>
    <property type="match status" value="1"/>
</dbReference>
<dbReference type="Gene3D" id="2.40.30.20">
    <property type="match status" value="1"/>
</dbReference>
<dbReference type="Gene3D" id="1.20.150.20">
    <property type="entry name" value="ATP synthase alpha/beta chain, C-terminal domain"/>
    <property type="match status" value="1"/>
</dbReference>
<dbReference type="Gene3D" id="3.40.50.300">
    <property type="entry name" value="P-loop containing nucleotide triphosphate hydrolases"/>
    <property type="match status" value="1"/>
</dbReference>
<dbReference type="HAMAP" id="MF_01346">
    <property type="entry name" value="ATP_synth_alpha_bact"/>
    <property type="match status" value="1"/>
</dbReference>
<dbReference type="InterPro" id="IPR023366">
    <property type="entry name" value="ATP_synth_asu-like_sf"/>
</dbReference>
<dbReference type="InterPro" id="IPR000793">
    <property type="entry name" value="ATP_synth_asu_C"/>
</dbReference>
<dbReference type="InterPro" id="IPR038376">
    <property type="entry name" value="ATP_synth_asu_C_sf"/>
</dbReference>
<dbReference type="InterPro" id="IPR033732">
    <property type="entry name" value="ATP_synth_F1_a_nt-bd_dom"/>
</dbReference>
<dbReference type="InterPro" id="IPR005294">
    <property type="entry name" value="ATP_synth_F1_asu"/>
</dbReference>
<dbReference type="InterPro" id="IPR020003">
    <property type="entry name" value="ATPase_a/bsu_AS"/>
</dbReference>
<dbReference type="InterPro" id="IPR004100">
    <property type="entry name" value="ATPase_F1/V1/A1_a/bsu_N"/>
</dbReference>
<dbReference type="InterPro" id="IPR036121">
    <property type="entry name" value="ATPase_F1/V1/A1_a/bsu_N_sf"/>
</dbReference>
<dbReference type="InterPro" id="IPR000194">
    <property type="entry name" value="ATPase_F1/V1/A1_a/bsu_nucl-bd"/>
</dbReference>
<dbReference type="InterPro" id="IPR027417">
    <property type="entry name" value="P-loop_NTPase"/>
</dbReference>
<dbReference type="NCBIfam" id="TIGR00962">
    <property type="entry name" value="atpA"/>
    <property type="match status" value="1"/>
</dbReference>
<dbReference type="NCBIfam" id="NF009884">
    <property type="entry name" value="PRK13343.1"/>
    <property type="match status" value="1"/>
</dbReference>
<dbReference type="PANTHER" id="PTHR48082">
    <property type="entry name" value="ATP SYNTHASE SUBUNIT ALPHA, MITOCHONDRIAL"/>
    <property type="match status" value="1"/>
</dbReference>
<dbReference type="PANTHER" id="PTHR48082:SF2">
    <property type="entry name" value="ATP SYNTHASE SUBUNIT ALPHA, MITOCHONDRIAL"/>
    <property type="match status" value="1"/>
</dbReference>
<dbReference type="Pfam" id="PF00006">
    <property type="entry name" value="ATP-synt_ab"/>
    <property type="match status" value="1"/>
</dbReference>
<dbReference type="Pfam" id="PF00306">
    <property type="entry name" value="ATP-synt_ab_C"/>
    <property type="match status" value="1"/>
</dbReference>
<dbReference type="Pfam" id="PF02874">
    <property type="entry name" value="ATP-synt_ab_N"/>
    <property type="match status" value="1"/>
</dbReference>
<dbReference type="SUPFAM" id="SSF47917">
    <property type="entry name" value="C-terminal domain of alpha and beta subunits of F1 ATP synthase"/>
    <property type="match status" value="1"/>
</dbReference>
<dbReference type="SUPFAM" id="SSF50615">
    <property type="entry name" value="N-terminal domain of alpha and beta subunits of F1 ATP synthase"/>
    <property type="match status" value="1"/>
</dbReference>
<dbReference type="SUPFAM" id="SSF52540">
    <property type="entry name" value="P-loop containing nucleoside triphosphate hydrolases"/>
    <property type="match status" value="1"/>
</dbReference>
<dbReference type="PROSITE" id="PS00152">
    <property type="entry name" value="ATPASE_ALPHA_BETA"/>
    <property type="match status" value="1"/>
</dbReference>